<name>BH126_ARATH</name>
<sequence length="221" mass="24465">MDPYKNLNPKGYQRQRPFSSAGESGGSGGSGTAHETDDNKKKKKLLHRDIERQRRQEMATLFATLRTHLPLKYIKGKRAVSDHVNGAVNFIKDTEARIKELSARRDELSRETGQGYKSNPDPGKTGSDVGKSEPATVMVQPHVSGLEVVVSSNSSGPEALPLSKVLETIQEKGLEVMSSFTTRVNDRLMHTIQVEVNSFGCIDLLWLQQKLVEDLILSTGY</sequence>
<evidence type="ECO:0000255" key="1">
    <source>
        <dbReference type="PROSITE-ProRule" id="PRU00981"/>
    </source>
</evidence>
<evidence type="ECO:0000256" key="2">
    <source>
        <dbReference type="SAM" id="MobiDB-lite"/>
    </source>
</evidence>
<evidence type="ECO:0000305" key="3"/>
<reference key="1">
    <citation type="journal article" date="1999" name="Nature">
        <title>Sequence and analysis of chromosome 4 of the plant Arabidopsis thaliana.</title>
        <authorList>
            <person name="Mayer K.F.X."/>
            <person name="Schueller C."/>
            <person name="Wambutt R."/>
            <person name="Murphy G."/>
            <person name="Volckaert G."/>
            <person name="Pohl T."/>
            <person name="Duesterhoeft A."/>
            <person name="Stiekema W."/>
            <person name="Entian K.-D."/>
            <person name="Terryn N."/>
            <person name="Harris B."/>
            <person name="Ansorge W."/>
            <person name="Brandt P."/>
            <person name="Grivell L.A."/>
            <person name="Rieger M."/>
            <person name="Weichselgartner M."/>
            <person name="de Simone V."/>
            <person name="Obermaier B."/>
            <person name="Mache R."/>
            <person name="Mueller M."/>
            <person name="Kreis M."/>
            <person name="Delseny M."/>
            <person name="Puigdomenech P."/>
            <person name="Watson M."/>
            <person name="Schmidtheini T."/>
            <person name="Reichert B."/>
            <person name="Portetelle D."/>
            <person name="Perez-Alonso M."/>
            <person name="Boutry M."/>
            <person name="Bancroft I."/>
            <person name="Vos P."/>
            <person name="Hoheisel J."/>
            <person name="Zimmermann W."/>
            <person name="Wedler H."/>
            <person name="Ridley P."/>
            <person name="Langham S.-A."/>
            <person name="McCullagh B."/>
            <person name="Bilham L."/>
            <person name="Robben J."/>
            <person name="van der Schueren J."/>
            <person name="Grymonprez B."/>
            <person name="Chuang Y.-J."/>
            <person name="Vandenbussche F."/>
            <person name="Braeken M."/>
            <person name="Weltjens I."/>
            <person name="Voet M."/>
            <person name="Bastiaens I."/>
            <person name="Aert R."/>
            <person name="Defoor E."/>
            <person name="Weitzenegger T."/>
            <person name="Bothe G."/>
            <person name="Ramsperger U."/>
            <person name="Hilbert H."/>
            <person name="Braun M."/>
            <person name="Holzer E."/>
            <person name="Brandt A."/>
            <person name="Peters S."/>
            <person name="van Staveren M."/>
            <person name="Dirkse W."/>
            <person name="Mooijman P."/>
            <person name="Klein Lankhorst R."/>
            <person name="Rose M."/>
            <person name="Hauf J."/>
            <person name="Koetter P."/>
            <person name="Berneiser S."/>
            <person name="Hempel S."/>
            <person name="Feldpausch M."/>
            <person name="Lamberth S."/>
            <person name="Van den Daele H."/>
            <person name="De Keyser A."/>
            <person name="Buysshaert C."/>
            <person name="Gielen J."/>
            <person name="Villarroel R."/>
            <person name="De Clercq R."/>
            <person name="van Montagu M."/>
            <person name="Rogers J."/>
            <person name="Cronin A."/>
            <person name="Quail M.A."/>
            <person name="Bray-Allen S."/>
            <person name="Clark L."/>
            <person name="Doggett J."/>
            <person name="Hall S."/>
            <person name="Kay M."/>
            <person name="Lennard N."/>
            <person name="McLay K."/>
            <person name="Mayes R."/>
            <person name="Pettett A."/>
            <person name="Rajandream M.A."/>
            <person name="Lyne M."/>
            <person name="Benes V."/>
            <person name="Rechmann S."/>
            <person name="Borkova D."/>
            <person name="Bloecker H."/>
            <person name="Scharfe M."/>
            <person name="Grimm M."/>
            <person name="Loehnert T.-H."/>
            <person name="Dose S."/>
            <person name="de Haan M."/>
            <person name="Maarse A.C."/>
            <person name="Schaefer M."/>
            <person name="Mueller-Auer S."/>
            <person name="Gabel C."/>
            <person name="Fuchs M."/>
            <person name="Fartmann B."/>
            <person name="Granderath K."/>
            <person name="Dauner D."/>
            <person name="Herzl A."/>
            <person name="Neumann S."/>
            <person name="Argiriou A."/>
            <person name="Vitale D."/>
            <person name="Liguori R."/>
            <person name="Piravandi E."/>
            <person name="Massenet O."/>
            <person name="Quigley F."/>
            <person name="Clabauld G."/>
            <person name="Muendlein A."/>
            <person name="Felber R."/>
            <person name="Schnabl S."/>
            <person name="Hiller R."/>
            <person name="Schmidt W."/>
            <person name="Lecharny A."/>
            <person name="Aubourg S."/>
            <person name="Chefdor F."/>
            <person name="Cooke R."/>
            <person name="Berger C."/>
            <person name="Monfort A."/>
            <person name="Casacuberta E."/>
            <person name="Gibbons T."/>
            <person name="Weber N."/>
            <person name="Vandenbol M."/>
            <person name="Bargues M."/>
            <person name="Terol J."/>
            <person name="Torres A."/>
            <person name="Perez-Perez A."/>
            <person name="Purnelle B."/>
            <person name="Bent E."/>
            <person name="Johnson S."/>
            <person name="Tacon D."/>
            <person name="Jesse T."/>
            <person name="Heijnen L."/>
            <person name="Schwarz S."/>
            <person name="Scholler P."/>
            <person name="Heber S."/>
            <person name="Francs P."/>
            <person name="Bielke C."/>
            <person name="Frishman D."/>
            <person name="Haase D."/>
            <person name="Lemcke K."/>
            <person name="Mewes H.-W."/>
            <person name="Stocker S."/>
            <person name="Zaccaria P."/>
            <person name="Bevan M."/>
            <person name="Wilson R.K."/>
            <person name="de la Bastide M."/>
            <person name="Habermann K."/>
            <person name="Parnell L."/>
            <person name="Dedhia N."/>
            <person name="Gnoj L."/>
            <person name="Schutz K."/>
            <person name="Huang E."/>
            <person name="Spiegel L."/>
            <person name="Sekhon M."/>
            <person name="Murray J."/>
            <person name="Sheet P."/>
            <person name="Cordes M."/>
            <person name="Abu-Threideh J."/>
            <person name="Stoneking T."/>
            <person name="Kalicki J."/>
            <person name="Graves T."/>
            <person name="Harmon G."/>
            <person name="Edwards J."/>
            <person name="Latreille P."/>
            <person name="Courtney L."/>
            <person name="Cloud J."/>
            <person name="Abbott A."/>
            <person name="Scott K."/>
            <person name="Johnson D."/>
            <person name="Minx P."/>
            <person name="Bentley D."/>
            <person name="Fulton B."/>
            <person name="Miller N."/>
            <person name="Greco T."/>
            <person name="Kemp K."/>
            <person name="Kramer J."/>
            <person name="Fulton L."/>
            <person name="Mardis E."/>
            <person name="Dante M."/>
            <person name="Pepin K."/>
            <person name="Hillier L.W."/>
            <person name="Nelson J."/>
            <person name="Spieth J."/>
            <person name="Ryan E."/>
            <person name="Andrews S."/>
            <person name="Geisel C."/>
            <person name="Layman D."/>
            <person name="Du H."/>
            <person name="Ali J."/>
            <person name="Berghoff A."/>
            <person name="Jones K."/>
            <person name="Drone K."/>
            <person name="Cotton M."/>
            <person name="Joshu C."/>
            <person name="Antonoiu B."/>
            <person name="Zidanic M."/>
            <person name="Strong C."/>
            <person name="Sun H."/>
            <person name="Lamar B."/>
            <person name="Yordan C."/>
            <person name="Ma P."/>
            <person name="Zhong J."/>
            <person name="Preston R."/>
            <person name="Vil D."/>
            <person name="Shekher M."/>
            <person name="Matero A."/>
            <person name="Shah R."/>
            <person name="Swaby I.K."/>
            <person name="O'Shaughnessy A."/>
            <person name="Rodriguez M."/>
            <person name="Hoffman J."/>
            <person name="Till S."/>
            <person name="Granat S."/>
            <person name="Shohdy N."/>
            <person name="Hasegawa A."/>
            <person name="Hameed A."/>
            <person name="Lodhi M."/>
            <person name="Johnson A."/>
            <person name="Chen E."/>
            <person name="Marra M.A."/>
            <person name="Martienssen R."/>
            <person name="McCombie W.R."/>
        </authorList>
    </citation>
    <scope>NUCLEOTIDE SEQUENCE [LARGE SCALE GENOMIC DNA]</scope>
    <source>
        <strain>cv. Columbia</strain>
    </source>
</reference>
<reference key="2">
    <citation type="journal article" date="2017" name="Plant J.">
        <title>Araport11: a complete reannotation of the Arabidopsis thaliana reference genome.</title>
        <authorList>
            <person name="Cheng C.Y."/>
            <person name="Krishnakumar V."/>
            <person name="Chan A.P."/>
            <person name="Thibaud-Nissen F."/>
            <person name="Schobel S."/>
            <person name="Town C.D."/>
        </authorList>
    </citation>
    <scope>GENOME REANNOTATION</scope>
    <source>
        <strain>cv. Columbia</strain>
    </source>
</reference>
<reference key="3">
    <citation type="submission" date="2009-03" db="EMBL/GenBank/DDBJ databases">
        <title>ORF cloning and analysis of Arabidopsis transcription factor genes.</title>
        <authorList>
            <person name="Fujita M."/>
            <person name="Mizukado S."/>
            <person name="Seki M."/>
            <person name="Shinozaki K."/>
            <person name="Mitsuda N."/>
            <person name="Takiguchi Y."/>
            <person name="Takagi M."/>
        </authorList>
    </citation>
    <scope>NUCLEOTIDE SEQUENCE [LARGE SCALE MRNA]</scope>
</reference>
<reference key="4">
    <citation type="journal article" date="2003" name="Mol. Biol. Evol.">
        <title>The basic helix-loop-helix transcription factor family in plants: a genome-wide study of protein structure and functional diversity.</title>
        <authorList>
            <person name="Heim M.A."/>
            <person name="Jakoby M."/>
            <person name="Werber M."/>
            <person name="Martin C."/>
            <person name="Weisshaar B."/>
            <person name="Bailey P.C."/>
        </authorList>
    </citation>
    <scope>GENE FAMILY</scope>
    <scope>NOMENCLATURE</scope>
</reference>
<reference key="5">
    <citation type="journal article" date="2003" name="Plant Cell">
        <title>The Arabidopsis basic/helix-loop-helix transcription factor family.</title>
        <authorList>
            <person name="Toledo-Ortiz G."/>
            <person name="Huq E."/>
            <person name="Quail P.H."/>
        </authorList>
    </citation>
    <scope>GENE FAMILY</scope>
</reference>
<reference key="6">
    <citation type="journal article" date="2003" name="Plant Cell">
        <title>Update on the basic helix-loop-helix transcription factor gene family in Arabidopsis thaliana.</title>
        <authorList>
            <person name="Bailey P.C."/>
            <person name="Martin C."/>
            <person name="Toledo-Ortiz G."/>
            <person name="Quail P.H."/>
            <person name="Huq E."/>
            <person name="Heim M.A."/>
            <person name="Jakoby M."/>
            <person name="Werber M."/>
            <person name="Weisshaar B."/>
        </authorList>
    </citation>
    <scope>GENE FAMILY</scope>
    <scope>NOMENCLATURE</scope>
</reference>
<dbReference type="EMBL" id="AL079350">
    <property type="protein sequence ID" value="CAB45518.1"/>
    <property type="molecule type" value="Genomic_DNA"/>
</dbReference>
<dbReference type="EMBL" id="AL161563">
    <property type="protein sequence ID" value="CAB81352.1"/>
    <property type="molecule type" value="Genomic_DNA"/>
</dbReference>
<dbReference type="EMBL" id="CP002687">
    <property type="protein sequence ID" value="AEE85054.2"/>
    <property type="molecule type" value="Genomic_DNA"/>
</dbReference>
<dbReference type="EMBL" id="AB493700">
    <property type="protein sequence ID" value="BAH30538.1"/>
    <property type="molecule type" value="mRNA"/>
</dbReference>
<dbReference type="PIR" id="T10221">
    <property type="entry name" value="T10221"/>
</dbReference>
<dbReference type="RefSeq" id="NP_001320062.1">
    <property type="nucleotide sequence ID" value="NM_001341730.1"/>
</dbReference>
<dbReference type="SMR" id="Q9STJ6"/>
<dbReference type="BioGRID" id="13931">
    <property type="interactions" value="2"/>
</dbReference>
<dbReference type="FunCoup" id="Q9STJ6">
    <property type="interactions" value="95"/>
</dbReference>
<dbReference type="IntAct" id="Q9STJ6">
    <property type="interactions" value="1"/>
</dbReference>
<dbReference type="STRING" id="3702.Q9STJ6"/>
<dbReference type="PaxDb" id="3702-AT4G25410.1"/>
<dbReference type="EnsemblPlants" id="AT4G25410.1">
    <property type="protein sequence ID" value="AT4G25410.1"/>
    <property type="gene ID" value="AT4G25410"/>
</dbReference>
<dbReference type="GeneID" id="828644"/>
<dbReference type="Gramene" id="AT4G25410.1">
    <property type="protein sequence ID" value="AT4G25410.1"/>
    <property type="gene ID" value="AT4G25410"/>
</dbReference>
<dbReference type="KEGG" id="ath:AT4G25410"/>
<dbReference type="Araport" id="AT4G25410"/>
<dbReference type="TAIR" id="AT4G25410"/>
<dbReference type="eggNOG" id="ENOG502S1BU">
    <property type="taxonomic scope" value="Eukaryota"/>
</dbReference>
<dbReference type="HOGENOM" id="CLU_094733_1_1_1"/>
<dbReference type="InParanoid" id="Q9STJ6"/>
<dbReference type="OMA" id="TRTHHDP"/>
<dbReference type="PhylomeDB" id="Q9STJ6"/>
<dbReference type="PRO" id="PR:Q9STJ6"/>
<dbReference type="Proteomes" id="UP000006548">
    <property type="component" value="Chromosome 4"/>
</dbReference>
<dbReference type="ExpressionAtlas" id="Q9STJ6">
    <property type="expression patterns" value="baseline and differential"/>
</dbReference>
<dbReference type="GO" id="GO:0005634">
    <property type="term" value="C:nucleus"/>
    <property type="evidence" value="ECO:0007669"/>
    <property type="project" value="UniProtKB-SubCell"/>
</dbReference>
<dbReference type="GO" id="GO:0003677">
    <property type="term" value="F:DNA binding"/>
    <property type="evidence" value="ECO:0007669"/>
    <property type="project" value="UniProtKB-KW"/>
</dbReference>
<dbReference type="GO" id="GO:0003700">
    <property type="term" value="F:DNA-binding transcription factor activity"/>
    <property type="evidence" value="ECO:0007669"/>
    <property type="project" value="InterPro"/>
</dbReference>
<dbReference type="GO" id="GO:0046983">
    <property type="term" value="F:protein dimerization activity"/>
    <property type="evidence" value="ECO:0007669"/>
    <property type="project" value="InterPro"/>
</dbReference>
<dbReference type="GO" id="GO:0006357">
    <property type="term" value="P:regulation of transcription by RNA polymerase II"/>
    <property type="evidence" value="ECO:0007669"/>
    <property type="project" value="InterPro"/>
</dbReference>
<dbReference type="CDD" id="cd18914">
    <property type="entry name" value="bHLH_AtORG2_like"/>
    <property type="match status" value="1"/>
</dbReference>
<dbReference type="Gene3D" id="4.10.280.10">
    <property type="entry name" value="Helix-loop-helix DNA-binding domain"/>
    <property type="match status" value="1"/>
</dbReference>
<dbReference type="InterPro" id="IPR011598">
    <property type="entry name" value="bHLH_dom"/>
</dbReference>
<dbReference type="InterPro" id="IPR036638">
    <property type="entry name" value="HLH_DNA-bd_sf"/>
</dbReference>
<dbReference type="InterPro" id="IPR015660">
    <property type="entry name" value="MASH1/Ascl1a-like"/>
</dbReference>
<dbReference type="PANTHER" id="PTHR13935:SF106">
    <property type="entry name" value="ACHAETE-SCUTE COMPLEX PROTEIN T5-RELATED"/>
    <property type="match status" value="1"/>
</dbReference>
<dbReference type="PANTHER" id="PTHR13935">
    <property type="entry name" value="ACHAETE-SCUTE TRANSCRIPTION FACTOR-RELATED"/>
    <property type="match status" value="1"/>
</dbReference>
<dbReference type="Pfam" id="PF00010">
    <property type="entry name" value="HLH"/>
    <property type="match status" value="1"/>
</dbReference>
<dbReference type="SUPFAM" id="SSF47459">
    <property type="entry name" value="HLH, helix-loop-helix DNA-binding domain"/>
    <property type="match status" value="1"/>
</dbReference>
<dbReference type="PROSITE" id="PS50888">
    <property type="entry name" value="BHLH"/>
    <property type="match status" value="1"/>
</dbReference>
<protein>
    <recommendedName>
        <fullName>Transcription factor bHLH126</fullName>
    </recommendedName>
    <alternativeName>
        <fullName>Basic helix-loop-helix protein 126</fullName>
        <shortName>AtbHLH126</shortName>
        <shortName>bHLH 126</shortName>
    </alternativeName>
    <alternativeName>
        <fullName>Transcription factor EN 3</fullName>
    </alternativeName>
    <alternativeName>
        <fullName>bHLH transcription factor bHLH126</fullName>
    </alternativeName>
</protein>
<feature type="chain" id="PRO_0000358810" description="Transcription factor bHLH126">
    <location>
        <begin position="1"/>
        <end position="221"/>
    </location>
</feature>
<feature type="domain" description="bHLH" evidence="1">
    <location>
        <begin position="42"/>
        <end position="94"/>
    </location>
</feature>
<feature type="region of interest" description="Disordered" evidence="2">
    <location>
        <begin position="1"/>
        <end position="46"/>
    </location>
</feature>
<feature type="region of interest" description="Disordered" evidence="2">
    <location>
        <begin position="104"/>
        <end position="132"/>
    </location>
</feature>
<organism>
    <name type="scientific">Arabidopsis thaliana</name>
    <name type="common">Mouse-ear cress</name>
    <dbReference type="NCBI Taxonomy" id="3702"/>
    <lineage>
        <taxon>Eukaryota</taxon>
        <taxon>Viridiplantae</taxon>
        <taxon>Streptophyta</taxon>
        <taxon>Embryophyta</taxon>
        <taxon>Tracheophyta</taxon>
        <taxon>Spermatophyta</taxon>
        <taxon>Magnoliopsida</taxon>
        <taxon>eudicotyledons</taxon>
        <taxon>Gunneridae</taxon>
        <taxon>Pentapetalae</taxon>
        <taxon>rosids</taxon>
        <taxon>malvids</taxon>
        <taxon>Brassicales</taxon>
        <taxon>Brassicaceae</taxon>
        <taxon>Camelineae</taxon>
        <taxon>Arabidopsis</taxon>
    </lineage>
</organism>
<keyword id="KW-0238">DNA-binding</keyword>
<keyword id="KW-0539">Nucleus</keyword>
<keyword id="KW-1185">Reference proteome</keyword>
<keyword id="KW-0804">Transcription</keyword>
<keyword id="KW-0805">Transcription regulation</keyword>
<comment type="subunit">
    <text evidence="3">Homodimer.</text>
</comment>
<comment type="subcellular location">
    <subcellularLocation>
        <location evidence="1">Nucleus</location>
    </subcellularLocation>
</comment>
<accession>Q9STJ6</accession>
<accession>C0SVJ7</accession>
<accession>F4JSL5</accession>
<proteinExistence type="evidence at transcript level"/>
<gene>
    <name type="primary">BHLH126</name>
    <name type="synonym">EN3</name>
    <name type="ordered locus">At4g25410</name>
    <name type="ORF">T30C3.80</name>
</gene>